<gene>
    <name evidence="8" type="primary">SNAP33</name>
    <name evidence="6" type="synonym">SNAP33B</name>
    <name evidence="10" type="ordered locus">At5g61210</name>
    <name evidence="11" type="ORF">MAF19.21</name>
</gene>
<comment type="function">
    <text>t-SNARE involved in diverse vesicle trafficking and membrane fusion processes, including cell plate formation. May function in the secretory pathway.</text>
</comment>
<comment type="subunit">
    <text evidence="3 5">Interacts with the cytokinesis-specific syntaxin KNOLLE and with SYP121 (PubMed:11718726). Binds to EXO70B2 (PubMed:21199889).</text>
</comment>
<comment type="interaction">
    <interactant intactId="EBI-603017">
        <id>Q9S7P9</id>
    </interactant>
    <interactant intactId="EBI-603005">
        <id>Q9C5X3</id>
        <label>KEU</label>
    </interactant>
    <organismsDiffer>false</organismsDiffer>
    <experiments>5</experiments>
</comment>
<comment type="interaction">
    <interactant intactId="EBI-603017">
        <id>Q9S7P9</id>
    </interactant>
    <interactant intactId="EBI-4476863">
        <id>Q9ZSD4</id>
        <label>SYP121</label>
    </interactant>
    <organismsDiffer>false</organismsDiffer>
    <experiments>4</experiments>
</comment>
<comment type="subcellular location">
    <subcellularLocation>
        <location>Membrane</location>
    </subcellularLocation>
    <text>Plasma membrane, some endomembrane compartment and cell plate in dividing cells.</text>
</comment>
<comment type="tissue specificity">
    <text>Ubiquitous, with a strong expression in root tips, ovules, very young leaves, vascular tissue, hydathodes, stipules and the abscission and dehiscence zones of the siliques.</text>
</comment>
<comment type="induction">
    <text evidence="4">Locally and systemically induced by pathogen infection and locally only by mechanical stresses.</text>
</comment>
<comment type="similarity">
    <text evidence="9">Belongs to the SNAP-25 family.</text>
</comment>
<evidence type="ECO:0000255" key="1">
    <source>
        <dbReference type="PROSITE-ProRule" id="PRU00202"/>
    </source>
</evidence>
<evidence type="ECO:0000256" key="2">
    <source>
        <dbReference type="SAM" id="MobiDB-lite"/>
    </source>
</evidence>
<evidence type="ECO:0000269" key="3">
    <source>
    </source>
</evidence>
<evidence type="ECO:0000269" key="4">
    <source>
    </source>
</evidence>
<evidence type="ECO:0000269" key="5">
    <source>
    </source>
</evidence>
<evidence type="ECO:0000303" key="6">
    <source>
    </source>
</evidence>
<evidence type="ECO:0000303" key="7">
    <source>
    </source>
</evidence>
<evidence type="ECO:0000303" key="8">
    <source>
    </source>
</evidence>
<evidence type="ECO:0000305" key="9"/>
<evidence type="ECO:0000312" key="10">
    <source>
        <dbReference type="Araport" id="AT5G61210"/>
    </source>
</evidence>
<evidence type="ECO:0000312" key="11">
    <source>
        <dbReference type="EMBL" id="BAB10383.1"/>
    </source>
</evidence>
<evidence type="ECO:0007744" key="12">
    <source>
    </source>
</evidence>
<feature type="chain" id="PRO_0000213604" description="SNAP25 homologous protein SNAP33">
    <location>
        <begin position="1"/>
        <end position="300"/>
    </location>
</feature>
<feature type="domain" description="t-SNARE coiled-coil homology" evidence="1">
    <location>
        <begin position="235"/>
        <end position="297"/>
    </location>
</feature>
<feature type="region of interest" description="Disordered" evidence="2">
    <location>
        <begin position="1"/>
        <end position="76"/>
    </location>
</feature>
<feature type="region of interest" description="Disordered" evidence="2">
    <location>
        <begin position="176"/>
        <end position="228"/>
    </location>
</feature>
<feature type="compositionally biased region" description="Polar residues" evidence="2">
    <location>
        <begin position="38"/>
        <end position="49"/>
    </location>
</feature>
<feature type="compositionally biased region" description="Basic and acidic residues" evidence="2">
    <location>
        <begin position="190"/>
        <end position="208"/>
    </location>
</feature>
<feature type="modified residue" description="Phosphoserine" evidence="12">
    <location>
        <position position="29"/>
    </location>
</feature>
<proteinExistence type="evidence at protein level"/>
<protein>
    <recommendedName>
        <fullName evidence="8">SNAP25 homologous protein SNAP33</fullName>
        <shortName evidence="8">AtSNAP33</shortName>
    </recommendedName>
    <alternativeName>
        <fullName evidence="7">Snap25a</fullName>
    </alternativeName>
    <alternativeName>
        <fullName evidence="7">Synaptosomal-associated protein SNAP25-like 1</fullName>
        <shortName evidence="7">SNAP-25-like protein 1</shortName>
    </alternativeName>
</protein>
<sequence length="300" mass="33644">MFGLRKSPANLPKHNSVDLKSSKPNPFDSDDESDNKHTLNPSKRTTSEPSLADMTNPFGGERVQKGDSSSSKQSLFSNSKYQYKNNFRDSGGIENQSVQELEGYAVYKAEETTKSVQGCLKVAEDIRSDATRTLVMLHDQGEQITRTHHKAVEIDHDLSRGEKLLGSLGGMFSKTWKPKKTRPINGPVVTRDDSPTRRVNHLEKREKLGLNSAPRGQSRTREPLPESADAYQRVEMEKAKQDDGLSDLSDILGELKNMAVDMGSEIEKQNKGLDHLHDDVDELNFRVQQSNQRGRRLLGK</sequence>
<dbReference type="EMBL" id="X92420">
    <property type="protein sequence ID" value="CAB52583.1"/>
    <property type="molecule type" value="mRNA"/>
</dbReference>
<dbReference type="EMBL" id="X92419">
    <property type="protein sequence ID" value="CAB52582.1"/>
    <property type="molecule type" value="mRNA"/>
</dbReference>
<dbReference type="EMBL" id="Y13198">
    <property type="protein sequence ID" value="CAC79615.1"/>
    <property type="molecule type" value="Genomic_DNA"/>
</dbReference>
<dbReference type="EMBL" id="AB006696">
    <property type="protein sequence ID" value="BAB10383.1"/>
    <property type="molecule type" value="Genomic_DNA"/>
</dbReference>
<dbReference type="EMBL" id="CP002688">
    <property type="protein sequence ID" value="AED97436.1"/>
    <property type="molecule type" value="Genomic_DNA"/>
</dbReference>
<dbReference type="EMBL" id="CP002688">
    <property type="protein sequence ID" value="ANM70496.1"/>
    <property type="molecule type" value="Genomic_DNA"/>
</dbReference>
<dbReference type="EMBL" id="AY057627">
    <property type="protein sequence ID" value="AAL15258.1"/>
    <property type="molecule type" value="mRNA"/>
</dbReference>
<dbReference type="EMBL" id="AY141994">
    <property type="protein sequence ID" value="AAM98258.1"/>
    <property type="molecule type" value="mRNA"/>
</dbReference>
<dbReference type="EMBL" id="AY085322">
    <property type="protein sequence ID" value="AAM62553.1"/>
    <property type="molecule type" value="mRNA"/>
</dbReference>
<dbReference type="RefSeq" id="NP_001332102.1">
    <property type="nucleotide sequence ID" value="NM_001345457.1"/>
</dbReference>
<dbReference type="RefSeq" id="NP_200929.1">
    <property type="nucleotide sequence ID" value="NM_125514.5"/>
</dbReference>
<dbReference type="SMR" id="Q9S7P9"/>
<dbReference type="BioGRID" id="21486">
    <property type="interactions" value="7"/>
</dbReference>
<dbReference type="DIP" id="DIP-33365N"/>
<dbReference type="FunCoup" id="Q9S7P9">
    <property type="interactions" value="1564"/>
</dbReference>
<dbReference type="IntAct" id="Q9S7P9">
    <property type="interactions" value="4"/>
</dbReference>
<dbReference type="STRING" id="3702.Q9S7P9"/>
<dbReference type="iPTMnet" id="Q9S7P9"/>
<dbReference type="PaxDb" id="3702-AT5G61210.1"/>
<dbReference type="ProteomicsDB" id="245323"/>
<dbReference type="EnsemblPlants" id="AT5G61210.1">
    <property type="protein sequence ID" value="AT5G61210.1"/>
    <property type="gene ID" value="AT5G61210"/>
</dbReference>
<dbReference type="EnsemblPlants" id="AT5G61210.2">
    <property type="protein sequence ID" value="AT5G61210.2"/>
    <property type="gene ID" value="AT5G61210"/>
</dbReference>
<dbReference type="GeneID" id="836242"/>
<dbReference type="Gramene" id="AT5G61210.1">
    <property type="protein sequence ID" value="AT5G61210.1"/>
    <property type="gene ID" value="AT5G61210"/>
</dbReference>
<dbReference type="Gramene" id="AT5G61210.2">
    <property type="protein sequence ID" value="AT5G61210.2"/>
    <property type="gene ID" value="AT5G61210"/>
</dbReference>
<dbReference type="KEGG" id="ath:AT5G61210"/>
<dbReference type="Araport" id="AT5G61210"/>
<dbReference type="TAIR" id="AT5G61210">
    <property type="gene designation" value="SNAP33"/>
</dbReference>
<dbReference type="eggNOG" id="KOG3065">
    <property type="taxonomic scope" value="Eukaryota"/>
</dbReference>
<dbReference type="HOGENOM" id="CLU_061058_0_0_1"/>
<dbReference type="InParanoid" id="Q9S7P9"/>
<dbReference type="OMA" id="ADMTNPF"/>
<dbReference type="OrthoDB" id="19261at2759"/>
<dbReference type="PhylomeDB" id="Q9S7P9"/>
<dbReference type="PRO" id="PR:Q9S7P9"/>
<dbReference type="Proteomes" id="UP000006548">
    <property type="component" value="Chromosome 5"/>
</dbReference>
<dbReference type="ExpressionAtlas" id="Q9S7P9">
    <property type="expression patterns" value="baseline and differential"/>
</dbReference>
<dbReference type="GO" id="GO:0009504">
    <property type="term" value="C:cell plate"/>
    <property type="evidence" value="ECO:0000314"/>
    <property type="project" value="TAIR"/>
</dbReference>
<dbReference type="GO" id="GO:0005886">
    <property type="term" value="C:plasma membrane"/>
    <property type="evidence" value="ECO:0000314"/>
    <property type="project" value="TAIR"/>
</dbReference>
<dbReference type="GO" id="GO:0031201">
    <property type="term" value="C:SNARE complex"/>
    <property type="evidence" value="ECO:0007669"/>
    <property type="project" value="InterPro"/>
</dbReference>
<dbReference type="GO" id="GO:0005484">
    <property type="term" value="F:SNAP receptor activity"/>
    <property type="evidence" value="ECO:0000250"/>
    <property type="project" value="TAIR"/>
</dbReference>
<dbReference type="GO" id="GO:0000911">
    <property type="term" value="P:cytokinesis by cell plate formation"/>
    <property type="evidence" value="ECO:0000315"/>
    <property type="project" value="TAIR"/>
</dbReference>
<dbReference type="GO" id="GO:0061025">
    <property type="term" value="P:membrane fusion"/>
    <property type="evidence" value="ECO:0000304"/>
    <property type="project" value="TAIR"/>
</dbReference>
<dbReference type="GO" id="GO:0015031">
    <property type="term" value="P:protein transport"/>
    <property type="evidence" value="ECO:0007669"/>
    <property type="project" value="UniProtKB-KW"/>
</dbReference>
<dbReference type="GO" id="GO:0009612">
    <property type="term" value="P:response to mechanical stimulus"/>
    <property type="evidence" value="ECO:0000270"/>
    <property type="project" value="TAIR"/>
</dbReference>
<dbReference type="GO" id="GO:0051707">
    <property type="term" value="P:response to other organism"/>
    <property type="evidence" value="ECO:0000270"/>
    <property type="project" value="TAIR"/>
</dbReference>
<dbReference type="GO" id="GO:0016192">
    <property type="term" value="P:vesicle-mediated transport"/>
    <property type="evidence" value="ECO:0000304"/>
    <property type="project" value="TAIR"/>
</dbReference>
<dbReference type="CDD" id="cd15841">
    <property type="entry name" value="SNARE_Qc"/>
    <property type="match status" value="1"/>
</dbReference>
<dbReference type="CDD" id="cd15861">
    <property type="entry name" value="SNARE_SNAP25N_23N_29N_SEC9N"/>
    <property type="match status" value="1"/>
</dbReference>
<dbReference type="FunFam" id="1.20.5.110:FF:000031">
    <property type="entry name" value="SNAP25 homologous protein SNAP33"/>
    <property type="match status" value="1"/>
</dbReference>
<dbReference type="FunFam" id="1.20.5.110:FF:000040">
    <property type="entry name" value="SNAP25 homologous protein SNAP33"/>
    <property type="match status" value="1"/>
</dbReference>
<dbReference type="Gene3D" id="1.20.5.110">
    <property type="match status" value="2"/>
</dbReference>
<dbReference type="InterPro" id="IPR044766">
    <property type="entry name" value="NPSN/SNAP25-like_N_SNARE"/>
</dbReference>
<dbReference type="InterPro" id="IPR000727">
    <property type="entry name" value="T_SNARE_dom"/>
</dbReference>
<dbReference type="PANTHER" id="PTHR19305">
    <property type="entry name" value="SYNAPTOSOMAL ASSOCIATED PROTEIN"/>
    <property type="match status" value="1"/>
</dbReference>
<dbReference type="PANTHER" id="PTHR19305:SF9">
    <property type="entry name" value="SYNAPTOSOMAL-ASSOCIATED PROTEIN 29"/>
    <property type="match status" value="1"/>
</dbReference>
<dbReference type="SMART" id="SM00397">
    <property type="entry name" value="t_SNARE"/>
    <property type="match status" value="2"/>
</dbReference>
<dbReference type="SUPFAM" id="SSF58038">
    <property type="entry name" value="SNARE fusion complex"/>
    <property type="match status" value="2"/>
</dbReference>
<dbReference type="PROSITE" id="PS50192">
    <property type="entry name" value="T_SNARE"/>
    <property type="match status" value="1"/>
</dbReference>
<reference key="1">
    <citation type="journal article" date="2001" name="J. Cell Biol.">
        <title>Functional characterization of the KNOLLE-interacting t-SNARE AtSNAP33 and its role in plant cytokinesis.</title>
        <authorList>
            <person name="Heese M."/>
            <person name="Gansel X."/>
            <person name="Sticher L."/>
            <person name="Wick P."/>
            <person name="Grebe M."/>
            <person name="Granier F."/>
            <person name="Juergens G."/>
        </authorList>
    </citation>
    <scope>NUCLEOTIDE SEQUENCE [MRNA]</scope>
    <scope>NUCLEOTIDE SEQUENCE [GENOMIC DNA]</scope>
    <scope>CHARACTERIZATION</scope>
    <source>
        <strain>cv. Columbia</strain>
        <strain>cv. Landsberg erecta</strain>
    </source>
</reference>
<reference key="2">
    <citation type="journal article" date="1997" name="DNA Res.">
        <title>Structural analysis of Arabidopsis thaliana chromosome 5. II. Sequence features of the regions of 1,044,062 bp covered by thirteen physically assigned P1 clones.</title>
        <authorList>
            <person name="Kotani H."/>
            <person name="Nakamura Y."/>
            <person name="Sato S."/>
            <person name="Kaneko T."/>
            <person name="Asamizu E."/>
            <person name="Miyajima N."/>
            <person name="Tabata S."/>
        </authorList>
    </citation>
    <scope>NUCLEOTIDE SEQUENCE [LARGE SCALE GENOMIC DNA]</scope>
    <source>
        <strain>cv. Columbia</strain>
    </source>
</reference>
<reference key="3">
    <citation type="journal article" date="2017" name="Plant J.">
        <title>Araport11: a complete reannotation of the Arabidopsis thaliana reference genome.</title>
        <authorList>
            <person name="Cheng C.Y."/>
            <person name="Krishnakumar V."/>
            <person name="Chan A.P."/>
            <person name="Thibaud-Nissen F."/>
            <person name="Schobel S."/>
            <person name="Town C.D."/>
        </authorList>
    </citation>
    <scope>GENOME REANNOTATION</scope>
    <source>
        <strain>cv. Columbia</strain>
    </source>
</reference>
<reference key="4">
    <citation type="journal article" date="2003" name="Science">
        <title>Empirical analysis of transcriptional activity in the Arabidopsis genome.</title>
        <authorList>
            <person name="Yamada K."/>
            <person name="Lim J."/>
            <person name="Dale J.M."/>
            <person name="Chen H."/>
            <person name="Shinn P."/>
            <person name="Palm C.J."/>
            <person name="Southwick A.M."/>
            <person name="Wu H.C."/>
            <person name="Kim C.J."/>
            <person name="Nguyen M."/>
            <person name="Pham P.K."/>
            <person name="Cheuk R.F."/>
            <person name="Karlin-Newmann G."/>
            <person name="Liu S.X."/>
            <person name="Lam B."/>
            <person name="Sakano H."/>
            <person name="Wu T."/>
            <person name="Yu G."/>
            <person name="Miranda M."/>
            <person name="Quach H.L."/>
            <person name="Tripp M."/>
            <person name="Chang C.H."/>
            <person name="Lee J.M."/>
            <person name="Toriumi M.J."/>
            <person name="Chan M.M."/>
            <person name="Tang C.C."/>
            <person name="Onodera C.S."/>
            <person name="Deng J.M."/>
            <person name="Akiyama K."/>
            <person name="Ansari Y."/>
            <person name="Arakawa T."/>
            <person name="Banh J."/>
            <person name="Banno F."/>
            <person name="Bowser L."/>
            <person name="Brooks S.Y."/>
            <person name="Carninci P."/>
            <person name="Chao Q."/>
            <person name="Choy N."/>
            <person name="Enju A."/>
            <person name="Goldsmith A.D."/>
            <person name="Gurjal M."/>
            <person name="Hansen N.F."/>
            <person name="Hayashizaki Y."/>
            <person name="Johnson-Hopson C."/>
            <person name="Hsuan V.W."/>
            <person name="Iida K."/>
            <person name="Karnes M."/>
            <person name="Khan S."/>
            <person name="Koesema E."/>
            <person name="Ishida J."/>
            <person name="Jiang P.X."/>
            <person name="Jones T."/>
            <person name="Kawai J."/>
            <person name="Kamiya A."/>
            <person name="Meyers C."/>
            <person name="Nakajima M."/>
            <person name="Narusaka M."/>
            <person name="Seki M."/>
            <person name="Sakurai T."/>
            <person name="Satou M."/>
            <person name="Tamse R."/>
            <person name="Vaysberg M."/>
            <person name="Wallender E.K."/>
            <person name="Wong C."/>
            <person name="Yamamura Y."/>
            <person name="Yuan S."/>
            <person name="Shinozaki K."/>
            <person name="Davis R.W."/>
            <person name="Theologis A."/>
            <person name="Ecker J.R."/>
        </authorList>
    </citation>
    <scope>NUCLEOTIDE SEQUENCE [LARGE SCALE MRNA]</scope>
    <source>
        <strain>cv. Columbia</strain>
    </source>
</reference>
<reference key="5">
    <citation type="submission" date="2002-03" db="EMBL/GenBank/DDBJ databases">
        <title>Full-length cDNA from Arabidopsis thaliana.</title>
        <authorList>
            <person name="Brover V.V."/>
            <person name="Troukhan M.E."/>
            <person name="Alexandrov N.A."/>
            <person name="Lu Y.-P."/>
            <person name="Flavell R.B."/>
            <person name="Feldmann K.A."/>
        </authorList>
    </citation>
    <scope>NUCLEOTIDE SEQUENCE [LARGE SCALE MRNA]</scope>
</reference>
<reference key="6">
    <citation type="journal article" date="2001" name="FEBS Lett.">
        <title>Protein-binding partners of the tobacco syntaxin NtSyr1.</title>
        <authorList>
            <person name="Kargul J."/>
            <person name="Gansel X."/>
            <person name="Tyrrell M."/>
            <person name="Sticher L."/>
            <person name="Blatt M.R."/>
        </authorList>
    </citation>
    <scope>CHARACTERIZATION</scope>
    <scope>INTERACTION WITH KNOLLE AND SYP121</scope>
</reference>
<reference key="7">
    <citation type="journal article" date="2003" name="Plant Physiol.">
        <title>The expression of the t-SNARE AtSNAP33 is induced by pathogens and mechanical stimulation.</title>
        <authorList>
            <person name="Wick P."/>
            <person name="Gansel X."/>
            <person name="Oulevey C."/>
            <person name="Page V."/>
            <person name="Studer I."/>
            <person name="Durst M."/>
            <person name="Sticher L."/>
        </authorList>
    </citation>
    <scope>INDUCTION</scope>
</reference>
<reference key="8">
    <citation type="journal article" date="2009" name="J. Proteomics">
        <title>Phosphoproteomic analysis of nuclei-enriched fractions from Arabidopsis thaliana.</title>
        <authorList>
            <person name="Jones A.M.E."/>
            <person name="MacLean D."/>
            <person name="Studholme D.J."/>
            <person name="Serna-Sanz A."/>
            <person name="Andreasson E."/>
            <person name="Rathjen J.P."/>
            <person name="Peck S.C."/>
        </authorList>
    </citation>
    <scope>IDENTIFICATION BY MASS SPECTROMETRY [LARGE SCALE ANALYSIS]</scope>
    <source>
        <strain>cv. Columbia</strain>
    </source>
</reference>
<reference key="9">
    <citation type="journal article" date="2009" name="Plant Physiol.">
        <title>Large-scale Arabidopsis phosphoproteome profiling reveals novel chloroplast kinase substrates and phosphorylation networks.</title>
        <authorList>
            <person name="Reiland S."/>
            <person name="Messerli G."/>
            <person name="Baerenfaller K."/>
            <person name="Gerrits B."/>
            <person name="Endler A."/>
            <person name="Grossmann J."/>
            <person name="Gruissem W."/>
            <person name="Baginsky S."/>
        </authorList>
    </citation>
    <scope>PHOSPHORYLATION [LARGE SCALE ANALYSIS] AT SER-29</scope>
    <scope>IDENTIFICATION BY MASS SPECTROMETRY [LARGE SCALE ANALYSIS]</scope>
</reference>
<reference key="10">
    <citation type="journal article" date="2011" name="J. Exp. Bot.">
        <title>The role for the exocyst complex subunits Exo70B2 and Exo70H1 in the plant-pathogen interaction.</title>
        <authorList>
            <person name="Pecenkova T."/>
            <person name="Hala M."/>
            <person name="Kulich I."/>
            <person name="Kocourkova D."/>
            <person name="Drdova E."/>
            <person name="Fendrych M."/>
            <person name="Toupalova H."/>
            <person name="Zarsky V."/>
        </authorList>
    </citation>
    <scope>INTERACTION WITH EXO70B2</scope>
    <source>
        <strain>cv. Columbia</strain>
    </source>
</reference>
<keyword id="KW-0131">Cell cycle</keyword>
<keyword id="KW-0132">Cell division</keyword>
<keyword id="KW-0175">Coiled coil</keyword>
<keyword id="KW-0472">Membrane</keyword>
<keyword id="KW-0597">Phosphoprotein</keyword>
<keyword id="KW-0653">Protein transport</keyword>
<keyword id="KW-1185">Reference proteome</keyword>
<keyword id="KW-0813">Transport</keyword>
<accession>Q9S7P9</accession>
<name>SNP33_ARATH</name>
<organism>
    <name type="scientific">Arabidopsis thaliana</name>
    <name type="common">Mouse-ear cress</name>
    <dbReference type="NCBI Taxonomy" id="3702"/>
    <lineage>
        <taxon>Eukaryota</taxon>
        <taxon>Viridiplantae</taxon>
        <taxon>Streptophyta</taxon>
        <taxon>Embryophyta</taxon>
        <taxon>Tracheophyta</taxon>
        <taxon>Spermatophyta</taxon>
        <taxon>Magnoliopsida</taxon>
        <taxon>eudicotyledons</taxon>
        <taxon>Gunneridae</taxon>
        <taxon>Pentapetalae</taxon>
        <taxon>rosids</taxon>
        <taxon>malvids</taxon>
        <taxon>Brassicales</taxon>
        <taxon>Brassicaceae</taxon>
        <taxon>Camelineae</taxon>
        <taxon>Arabidopsis</taxon>
    </lineage>
</organism>